<reference key="1">
    <citation type="journal article" date="2011" name="J. Bacteriol.">
        <title>Comparative genomics of 28 Salmonella enterica isolates: evidence for CRISPR-mediated adaptive sublineage evolution.</title>
        <authorList>
            <person name="Fricke W.F."/>
            <person name="Mammel M.K."/>
            <person name="McDermott P.F."/>
            <person name="Tartera C."/>
            <person name="White D.G."/>
            <person name="Leclerc J.E."/>
            <person name="Ravel J."/>
            <person name="Cebula T.A."/>
        </authorList>
    </citation>
    <scope>NUCLEOTIDE SEQUENCE [LARGE SCALE GENOMIC DNA]</scope>
    <source>
        <strain>SL483</strain>
    </source>
</reference>
<evidence type="ECO:0000255" key="1">
    <source>
        <dbReference type="HAMAP-Rule" id="MF_00048"/>
    </source>
</evidence>
<gene>
    <name evidence="1" type="primary">yraN</name>
    <name type="ordered locus">SeAg_B3452</name>
</gene>
<name>YRAN_SALA4</name>
<accession>B5F6R8</accession>
<protein>
    <recommendedName>
        <fullName evidence="1">UPF0102 protein YraN</fullName>
    </recommendedName>
</protein>
<feature type="chain" id="PRO_1000091257" description="UPF0102 protein YraN">
    <location>
        <begin position="1"/>
        <end position="131"/>
    </location>
</feature>
<comment type="similarity">
    <text evidence="1">Belongs to the UPF0102 family.</text>
</comment>
<dbReference type="EMBL" id="CP001138">
    <property type="protein sequence ID" value="ACH50458.1"/>
    <property type="molecule type" value="Genomic_DNA"/>
</dbReference>
<dbReference type="RefSeq" id="WP_000057284.1">
    <property type="nucleotide sequence ID" value="NC_011149.1"/>
</dbReference>
<dbReference type="SMR" id="B5F6R8"/>
<dbReference type="KEGG" id="sea:SeAg_B3452"/>
<dbReference type="HOGENOM" id="CLU_115353_1_0_6"/>
<dbReference type="Proteomes" id="UP000008819">
    <property type="component" value="Chromosome"/>
</dbReference>
<dbReference type="GO" id="GO:0003676">
    <property type="term" value="F:nucleic acid binding"/>
    <property type="evidence" value="ECO:0007669"/>
    <property type="project" value="InterPro"/>
</dbReference>
<dbReference type="Gene3D" id="3.40.1350.10">
    <property type="match status" value="1"/>
</dbReference>
<dbReference type="HAMAP" id="MF_00048">
    <property type="entry name" value="UPF0102"/>
    <property type="match status" value="1"/>
</dbReference>
<dbReference type="InterPro" id="IPR011335">
    <property type="entry name" value="Restrct_endonuc-II-like"/>
</dbReference>
<dbReference type="InterPro" id="IPR011856">
    <property type="entry name" value="tRNA_endonuc-like_dom_sf"/>
</dbReference>
<dbReference type="InterPro" id="IPR003509">
    <property type="entry name" value="UPF0102_YraN-like"/>
</dbReference>
<dbReference type="NCBIfam" id="NF009150">
    <property type="entry name" value="PRK12497.1-3"/>
    <property type="match status" value="1"/>
</dbReference>
<dbReference type="NCBIfam" id="TIGR00252">
    <property type="entry name" value="YraN family protein"/>
    <property type="match status" value="1"/>
</dbReference>
<dbReference type="PANTHER" id="PTHR34039">
    <property type="entry name" value="UPF0102 PROTEIN YRAN"/>
    <property type="match status" value="1"/>
</dbReference>
<dbReference type="PANTHER" id="PTHR34039:SF1">
    <property type="entry name" value="UPF0102 PROTEIN YRAN"/>
    <property type="match status" value="1"/>
</dbReference>
<dbReference type="Pfam" id="PF02021">
    <property type="entry name" value="UPF0102"/>
    <property type="match status" value="1"/>
</dbReference>
<dbReference type="SUPFAM" id="SSF52980">
    <property type="entry name" value="Restriction endonuclease-like"/>
    <property type="match status" value="1"/>
</dbReference>
<sequence length="131" mass="14884">MAQIPARGDCSRQLTRKQAGDAWEAAARRWLESKGLRFIAANVRERGGEIDLIMRDGKTTVFVEVRYRRSGLYGGAAASVTHSKQHKLLHTARLWLARQNGSFDTVDCRFDVLAFTGNEIEWFRDAFNDHS</sequence>
<proteinExistence type="inferred from homology"/>
<organism>
    <name type="scientific">Salmonella agona (strain SL483)</name>
    <dbReference type="NCBI Taxonomy" id="454166"/>
    <lineage>
        <taxon>Bacteria</taxon>
        <taxon>Pseudomonadati</taxon>
        <taxon>Pseudomonadota</taxon>
        <taxon>Gammaproteobacteria</taxon>
        <taxon>Enterobacterales</taxon>
        <taxon>Enterobacteriaceae</taxon>
        <taxon>Salmonella</taxon>
    </lineage>
</organism>